<dbReference type="EMBL" id="U00735">
    <property type="protein sequence ID" value="AAA42912.1"/>
    <property type="molecule type" value="Genomic_RNA"/>
</dbReference>
<dbReference type="PIR" id="B46346">
    <property type="entry name" value="B46346"/>
</dbReference>
<dbReference type="Proteomes" id="UP000007554">
    <property type="component" value="Genome"/>
</dbReference>
<dbReference type="InterPro" id="IPR005603">
    <property type="entry name" value="Corona_NS4"/>
</dbReference>
<dbReference type="Pfam" id="PF03905">
    <property type="entry name" value="Corona_NS4"/>
    <property type="match status" value="1"/>
</dbReference>
<name>NS48_CVBM</name>
<evidence type="ECO:0000305" key="1"/>
<comment type="similarity">
    <text evidence="1">Belongs to the coronaviruses ns4/ns4.8 protein family.</text>
</comment>
<protein>
    <recommendedName>
        <fullName>Non-structural protein of 4.8 kDa</fullName>
        <shortName>ns4.8</shortName>
    </recommendedName>
    <alternativeName>
        <fullName>4.8 kDa accessory protein</fullName>
    </alternativeName>
</protein>
<proteinExistence type="inferred from homology"/>
<gene>
    <name type="ORF">4b</name>
</gene>
<organismHost>
    <name type="scientific">Bos taurus</name>
    <name type="common">Bovine</name>
    <dbReference type="NCBI Taxonomy" id="9913"/>
</organismHost>
<organism>
    <name type="scientific">Bovine coronavirus (strain Mebus)</name>
    <name type="common">BCoV</name>
    <name type="synonym">BCV</name>
    <dbReference type="NCBI Taxonomy" id="11132"/>
    <lineage>
        <taxon>Viruses</taxon>
        <taxon>Riboviria</taxon>
        <taxon>Orthornavirae</taxon>
        <taxon>Pisuviricota</taxon>
        <taxon>Pisoniviricetes</taxon>
        <taxon>Nidovirales</taxon>
        <taxon>Cornidovirineae</taxon>
        <taxon>Coronaviridae</taxon>
        <taxon>Orthocoronavirinae</taxon>
        <taxon>Betacoronavirus</taxon>
        <taxon>Embecovirus</taxon>
        <taxon>Betacoronavirus 1</taxon>
    </lineage>
</organism>
<feature type="chain" id="PRO_0000106068" description="Non-structural protein of 4.8 kDa">
    <location>
        <begin position="1"/>
        <end position="45"/>
    </location>
</feature>
<accession>P22052</accession>
<reference key="1">
    <citation type="journal article" date="1990" name="Virology">
        <title>Sequence and expression analysis of potential nonstructural proteins of 4.9, 4.8, 12.7, and 9.5 kDa encoded between the spike and membrane protein genes of the bovine coronavirus.</title>
        <authorList>
            <person name="Abraham S."/>
            <person name="Kienzle T.E."/>
            <person name="Lapps W.E."/>
            <person name="Brian D.A."/>
        </authorList>
    </citation>
    <scope>NUCLEOTIDE SEQUENCE [GENOMIC RNA]</scope>
</reference>
<sequence>MPMATTIDGTDYTNIMPSTVSTTVYLGCSIGIDTSTTGFTCFSRY</sequence>